<reference key="1">
    <citation type="journal article" date="1994" name="J. Bacteriol.">
        <title>Genetic and biochemical analyses of the biosynthesis of the yellow carotenoid 4,4'-diaponeurosporene of Staphylococcus aureus.</title>
        <authorList>
            <person name="Wieland B."/>
            <person name="Feil C."/>
            <person name="Gloria-Maercker E."/>
            <person name="Thumm G."/>
            <person name="Lechner M."/>
            <person name="Bravo J.-M."/>
            <person name="Poralla K."/>
            <person name="Goetz F."/>
        </authorList>
    </citation>
    <scope>NUCLEOTIDE SEQUENCE [GENOMIC DNA]</scope>
    <scope>FUNCTION</scope>
    <scope>CATALYTIC ACTIVITY</scope>
</reference>
<reference key="2">
    <citation type="submission" date="1997-06" db="EMBL/GenBank/DDBJ databases">
        <authorList>
            <person name="Wieland B."/>
        </authorList>
    </citation>
    <scope>SEQUENCE REVISION TO C-TERMINUS</scope>
</reference>
<reference key="3">
    <citation type="journal article" date="2008" name="J. Bacteriol.">
        <title>Genome sequence of Staphylococcus aureus strain Newman and comparative analysis of staphylococcal genomes: polymorphism and evolution of two major pathogenicity islands.</title>
        <authorList>
            <person name="Baba T."/>
            <person name="Bae T."/>
            <person name="Schneewind O."/>
            <person name="Takeuchi F."/>
            <person name="Hiramatsu K."/>
        </authorList>
    </citation>
    <scope>NUCLEOTIDE SEQUENCE [LARGE SCALE GENOMIC DNA]</scope>
    <source>
        <strain>Newman</strain>
    </source>
</reference>
<reference key="4">
    <citation type="journal article" date="1999" name="J. Bacteriol.">
        <title>4,4'-diapophytoene desaturase: catalytic properties of an enzyme from the C(30) carotenoid pathway of Staphylococcus aureus.</title>
        <authorList>
            <person name="Raisig A."/>
            <person name="Sandmann G."/>
        </authorList>
    </citation>
    <scope>FUNCTION</scope>
    <scope>CATALYTIC ACTIVITY</scope>
    <scope>BIOPHYSICOCHEMICAL PROPERTIES</scope>
    <scope>SUBUNIT</scope>
</reference>
<reference key="5">
    <citation type="journal article" date="2001" name="Biochim. Biophys. Acta">
        <title>Functional properties of diapophytoene and related desaturases of C(30) and C(40) carotenoid biosynthetic pathways.</title>
        <authorList>
            <person name="Raisig A."/>
            <person name="Sandmann G."/>
        </authorList>
    </citation>
    <scope>FUNCTION</scope>
    <scope>CATALYTIC ACTIVITY</scope>
    <scope>ACTIVITY REGULATION</scope>
    <scope>BIOPHYSICOCHEMICAL PROPERTIES</scope>
    <scope>SUBSTRATE SPECIFICITY</scope>
</reference>
<reference key="6">
    <citation type="journal article" date="2005" name="J. Biol. Chem.">
        <title>Structure and biosynthesis of staphyloxanthin from Staphylococcus aureus.</title>
        <authorList>
            <person name="Pelz A."/>
            <person name="Wieland K.-P."/>
            <person name="Putzbach K."/>
            <person name="Hentschel P."/>
            <person name="Albert K."/>
            <person name="Goetz F."/>
        </authorList>
    </citation>
    <scope>PATHWAY</scope>
</reference>
<evidence type="ECO:0000255" key="1"/>
<evidence type="ECO:0000269" key="2">
    <source>
    </source>
</evidence>
<evidence type="ECO:0000269" key="3">
    <source>
    </source>
</evidence>
<evidence type="ECO:0000269" key="4">
    <source>
    </source>
</evidence>
<evidence type="ECO:0000269" key="5">
    <source>
    </source>
</evidence>
<evidence type="ECO:0000303" key="6">
    <source>
    </source>
</evidence>
<evidence type="ECO:0000303" key="7">
    <source>
    </source>
</evidence>
<evidence type="ECO:0000305" key="8"/>
<feature type="chain" id="PRO_0000272189" description="4,4'-diapophytoene desaturase (4,4'-diaponeurosporene-forming)">
    <location>
        <begin position="1"/>
        <end position="502"/>
    </location>
</feature>
<feature type="binding site" evidence="1">
    <location>
        <begin position="5"/>
        <end position="17"/>
    </location>
    <ligand>
        <name>FAD</name>
        <dbReference type="ChEBI" id="CHEBI:57692"/>
    </ligand>
</feature>
<feature type="sequence conflict" description="In Ref. 1; CAA52098." evidence="8" ref="1">
    <original>GV</original>
    <variation>AL</variation>
    <location>
        <begin position="479"/>
        <end position="480"/>
    </location>
</feature>
<feature type="sequence conflict" description="In Ref. 1; CAA52098." evidence="8" ref="1">
    <original>GV</original>
    <variation>AYKGVV</variation>
    <location>
        <begin position="501"/>
        <end position="502"/>
    </location>
</feature>
<dbReference type="EC" id="1.3.8.-" evidence="2 3 5"/>
<dbReference type="EMBL" id="X73889">
    <property type="protein sequence ID" value="CAA52098.1"/>
    <property type="molecule type" value="Genomic_DNA"/>
</dbReference>
<dbReference type="EMBL" id="AP009351">
    <property type="protein sequence ID" value="BAF68733.1"/>
    <property type="molecule type" value="Genomic_DNA"/>
</dbReference>
<dbReference type="RefSeq" id="WP_000686168.1">
    <property type="nucleotide sequence ID" value="NZ_JBBIAE010000005.1"/>
</dbReference>
<dbReference type="SMR" id="O07855"/>
<dbReference type="BindingDB" id="O07855"/>
<dbReference type="ChEMBL" id="CHEMBL3813586"/>
<dbReference type="DrugCentral" id="O07855"/>
<dbReference type="KEGG" id="sae:NWMN_2461"/>
<dbReference type="HOGENOM" id="CLU_019722_2_1_9"/>
<dbReference type="BioCyc" id="MetaCyc:MONOMER-13875"/>
<dbReference type="BRENDA" id="1.3.8.2">
    <property type="organism ID" value="3352"/>
</dbReference>
<dbReference type="SABIO-RK" id="O07855"/>
<dbReference type="UniPathway" id="UPA00029">
    <property type="reaction ID" value="UER00557"/>
</dbReference>
<dbReference type="Proteomes" id="UP000006386">
    <property type="component" value="Chromosome"/>
</dbReference>
<dbReference type="GO" id="GO:0102223">
    <property type="term" value="F:4,4'-diapophytoene desaturase (4,4'-diaponeurosporene-forming)"/>
    <property type="evidence" value="ECO:0007669"/>
    <property type="project" value="RHEA"/>
</dbReference>
<dbReference type="GO" id="GO:0016117">
    <property type="term" value="P:carotenoid biosynthetic process"/>
    <property type="evidence" value="ECO:0007669"/>
    <property type="project" value="UniProtKB-KW"/>
</dbReference>
<dbReference type="Gene3D" id="3.50.50.60">
    <property type="entry name" value="FAD/NAD(P)-binding domain"/>
    <property type="match status" value="2"/>
</dbReference>
<dbReference type="InterPro" id="IPR002937">
    <property type="entry name" value="Amino_oxidase"/>
</dbReference>
<dbReference type="InterPro" id="IPR014105">
    <property type="entry name" value="Carotenoid/retinoid_OxRdtase"/>
</dbReference>
<dbReference type="InterPro" id="IPR036188">
    <property type="entry name" value="FAD/NAD-bd_sf"/>
</dbReference>
<dbReference type="NCBIfam" id="TIGR02734">
    <property type="entry name" value="crtI_fam"/>
    <property type="match status" value="1"/>
</dbReference>
<dbReference type="PANTHER" id="PTHR43734">
    <property type="entry name" value="PHYTOENE DESATURASE"/>
    <property type="match status" value="1"/>
</dbReference>
<dbReference type="PANTHER" id="PTHR43734:SF1">
    <property type="entry name" value="PHYTOENE DESATURASE"/>
    <property type="match status" value="1"/>
</dbReference>
<dbReference type="Pfam" id="PF01593">
    <property type="entry name" value="Amino_oxidase"/>
    <property type="match status" value="1"/>
</dbReference>
<dbReference type="PRINTS" id="PR00419">
    <property type="entry name" value="ADXRDTASE"/>
</dbReference>
<dbReference type="SUPFAM" id="SSF51905">
    <property type="entry name" value="FAD/NAD(P)-binding domain"/>
    <property type="match status" value="1"/>
</dbReference>
<gene>
    <name evidence="7" type="primary">crtN</name>
    <name type="ordered locus">NWMN_2461</name>
</gene>
<organism>
    <name type="scientific">Staphylococcus aureus (strain Newman)</name>
    <dbReference type="NCBI Taxonomy" id="426430"/>
    <lineage>
        <taxon>Bacteria</taxon>
        <taxon>Bacillati</taxon>
        <taxon>Bacillota</taxon>
        <taxon>Bacilli</taxon>
        <taxon>Bacillales</taxon>
        <taxon>Staphylococcaceae</taxon>
        <taxon>Staphylococcus</taxon>
    </lineage>
</organism>
<sequence length="502" mass="56742">MKIAVIGAGVTGLAAAARIASQGHEVTIFEKNNNVGGRMNQLKKDGFTFDMGPTIVMMPDVYKDVFTACGKNYEDYIELRQLRYIYDVYFDHDDRITVPTDLAELQQMLESIEPGSTHGFMSFLTDVYKKYEIARRYFLERTYRKPSDFYNMTSLVQGAKLKTLNHADQLIEHYIDNEKIQKLLAFQTLYIGIDPKRGPSLYSIIPMIEMMFGVHFIKGGMYGMAQGLAQLNKDLGVNIELNAEIEQIIIDPKFKRADAIKVNGDIRKFDKILCTADFPSVAESLMPDFAPIKKYPPHKIADLDYSCSAFLMYIGIDIDVTDQVRLHNVIFSDDFRGNIEEIFEGRLSYDPSIYVYVPAVADKSLAPEGKTGIYVLMPTPELKTGSGIDWSDEALTQQIKEIIYRKLATIEVFEDIKSHIVSETIFTPNDFEQTYHAKFGSAFGLMPTLAQSNYYRPQNVSRDYKDLYFAGASTHPGAGVPIVLTSAKITVDEMIKDIERGV</sequence>
<name>CRTN_STAAE</name>
<keyword id="KW-0125">Carotenoid biosynthesis</keyword>
<keyword id="KW-0274">FAD</keyword>
<keyword id="KW-0285">Flavoprotein</keyword>
<keyword id="KW-0560">Oxidoreductase</keyword>
<keyword id="KW-0843">Virulence</keyword>
<comment type="function">
    <text evidence="2 3 5">Involved in the biosynthesis of the yellow-orange carotenoid staphyloxanthin, which plays a role in the virulence via its protective function against oxidative stress. Catalyzes three successive dehydrogenation reactions that lead to the introduction of three double bonds into 4,4'-diapophytoene (dehydrosqualene), with 4,4'-diapophytofluene and 4,4'-diapo-zeta-carotene as intermediates, and 4,4'-diaponeurosporene (the major deep-yellow pigment in staphylococci strains) as the end product.</text>
</comment>
<comment type="catalytic activity">
    <reaction evidence="2 3 5">
        <text>15-cis-4,4'-diapophytoene + 3 FAD + 3 H(+) = all-trans-4,4'-diaponeurosporene + 3 FADH2</text>
        <dbReference type="Rhea" id="RHEA:42800"/>
        <dbReference type="ChEBI" id="CHEBI:15378"/>
        <dbReference type="ChEBI" id="CHEBI:57692"/>
        <dbReference type="ChEBI" id="CHEBI:58307"/>
        <dbReference type="ChEBI" id="CHEBI:62738"/>
        <dbReference type="ChEBI" id="CHEBI:62743"/>
    </reaction>
</comment>
<comment type="activity regulation">
    <text evidence="3">Is inhibited by diphenylamine.</text>
</comment>
<comment type="biophysicochemical properties">
    <kinetics>
        <KM evidence="2 3">49 uM for 4,4'-diapophytoene</KM>
        <KM evidence="2 3">10 uM for 4,4'-diapophytofluene</KM>
        <KM evidence="2 3">245 uM for 4,4'-diapo-zeta-carotene</KM>
        <KM evidence="2 3">39 uM for FAD</KM>
        <KM evidence="2 3">40 uM for zeta-carotene</KM>
        <text>KM is greater than 1 mM for phytoene.</text>
    </kinetics>
    <phDependence>
        <text evidence="3">Optimum pH is 6.5.</text>
    </phDependence>
</comment>
<comment type="pathway">
    <text evidence="4">Carotenoid biosynthesis; staphyloxanthin biosynthesis; staphyloxanthin from farnesyl diphosphate: step 2/5.</text>
</comment>
<comment type="subunit">
    <text evidence="2">Homooligomer. The monomeric form also seems to be active.</text>
</comment>
<comment type="miscellaneous">
    <text evidence="3">Reacts with dehydrosqualene and not with squalene as substrate, however it can utilize zeta-carotene and phytoene to a certain extent.</text>
</comment>
<comment type="similarity">
    <text evidence="8">Belongs to the carotenoid/retinoid oxidoreductase family. CrtN subfamily.</text>
</comment>
<accession>O07855</accession>
<accession>A6QK51</accession>
<accession>Q53723</accession>
<proteinExistence type="evidence at protein level"/>
<protein>
    <recommendedName>
        <fullName evidence="6">4,4'-diapophytoene desaturase (4,4'-diaponeurosporene-forming)</fullName>
        <ecNumber evidence="2 3 5">1.3.8.-</ecNumber>
    </recommendedName>
    <alternativeName>
        <fullName evidence="8">Dehydrosqualene desaturase</fullName>
    </alternativeName>
</protein>